<organism>
    <name type="scientific">Sus scrofa</name>
    <name type="common">Pig</name>
    <dbReference type="NCBI Taxonomy" id="9823"/>
    <lineage>
        <taxon>Eukaryota</taxon>
        <taxon>Metazoa</taxon>
        <taxon>Chordata</taxon>
        <taxon>Craniata</taxon>
        <taxon>Vertebrata</taxon>
        <taxon>Euteleostomi</taxon>
        <taxon>Mammalia</taxon>
        <taxon>Eutheria</taxon>
        <taxon>Laurasiatheria</taxon>
        <taxon>Artiodactyla</taxon>
        <taxon>Suina</taxon>
        <taxon>Suidae</taxon>
        <taxon>Sus</taxon>
    </lineage>
</organism>
<keyword id="KW-0002">3D-structure</keyword>
<keyword id="KW-0007">Acetylation</keyword>
<keyword id="KW-0963">Cytoplasm</keyword>
<keyword id="KW-0903">Direct protein sequencing</keyword>
<keyword id="KW-0472">Membrane</keyword>
<keyword id="KW-0496">Mitochondrion</keyword>
<keyword id="KW-0999">Mitochondrion inner membrane</keyword>
<keyword id="KW-0520">NAD</keyword>
<keyword id="KW-0560">Oxidoreductase</keyword>
<keyword id="KW-0597">Phosphoprotein</keyword>
<keyword id="KW-1185">Reference proteome</keyword>
<comment type="function">
    <text evidence="2">Interconverts simultaneously and stereospecifically pyruvate and lactate with concomitant interconversion of NADH and NAD(+).</text>
</comment>
<comment type="catalytic activity">
    <reaction evidence="2">
        <text>(S)-lactate + NAD(+) = pyruvate + NADH + H(+)</text>
        <dbReference type="Rhea" id="RHEA:23444"/>
        <dbReference type="ChEBI" id="CHEBI:15361"/>
        <dbReference type="ChEBI" id="CHEBI:15378"/>
        <dbReference type="ChEBI" id="CHEBI:16651"/>
        <dbReference type="ChEBI" id="CHEBI:57540"/>
        <dbReference type="ChEBI" id="CHEBI:57945"/>
        <dbReference type="EC" id="1.1.1.27"/>
    </reaction>
    <physiologicalReaction direction="left-to-right" evidence="2">
        <dbReference type="Rhea" id="RHEA:23445"/>
    </physiologicalReaction>
    <physiologicalReaction direction="right-to-left" evidence="2">
        <dbReference type="Rhea" id="RHEA:23446"/>
    </physiologicalReaction>
</comment>
<comment type="pathway">
    <text evidence="2">Fermentation; pyruvate fermentation to lactate; (S)-lactate from pyruvate: step 1/1.</text>
</comment>
<comment type="subunit">
    <text evidence="2 3">Homotetramer (PubMed:7338899). Interacts with PTEN upstream reading frame protein MP31; the interaction leads to inhibition of mitochondrial lactate dehydrogenase activity, preventing conversion of lactate to pyruvate in mitochondria (By similarity).</text>
</comment>
<comment type="subcellular location">
    <subcellularLocation>
        <location>Cytoplasm</location>
    </subcellularLocation>
    <subcellularLocation>
        <location evidence="2">Mitochondrion inner membrane</location>
        <topology evidence="5">Peripheral membrane protein</topology>
    </subcellularLocation>
</comment>
<comment type="similarity">
    <text evidence="5">Belongs to the LDH/MDH superfamily. LDH family.</text>
</comment>
<sequence>MATLKEKLIAPVAEEETTIPNNKITVVGVGQVGMACAISILGKSLTDELALVDVLEDKLKGEMMDLQHGSLFLQTPKIVADKDYSVTANSKIVVVTAGVRQQEGESRLNLVQRNVNVFKFIIPQIVKYSPDCIIIVVSNPVDILTYVTWKLSGLPKHRVIGSGCNLDSARFRYLMAEKLGVHPSSCHGWILGEHGDSSVAVWSGVNVAGVSLQELNPEMGTDNDSENWKEVHKMVVESAYEVIKLKGYTNWAIGLSVADLIESMLKNLSRIHPVSTMVQGMYGIENEVFLSLPCVLNARGLTSVINQKLKDDEVAQLKNSADTLWGIQKDLKDL</sequence>
<protein>
    <recommendedName>
        <fullName>L-lactate dehydrogenase B chain</fullName>
        <shortName>LDH-B</shortName>
        <ecNumber evidence="2">1.1.1.27</ecNumber>
    </recommendedName>
    <alternativeName>
        <fullName>LDH heart subunit</fullName>
        <shortName>LDH-H</shortName>
    </alternativeName>
</protein>
<proteinExistence type="evidence at protein level"/>
<feature type="initiator methionine" description="Removed" evidence="4">
    <location>
        <position position="1"/>
    </location>
</feature>
<feature type="chain" id="PRO_0000168462" description="L-lactate dehydrogenase B chain">
    <location>
        <begin position="2"/>
        <end position="334"/>
    </location>
</feature>
<feature type="active site" description="Proton acceptor" evidence="1">
    <location>
        <position position="194"/>
    </location>
</feature>
<feature type="binding site" evidence="1">
    <location>
        <begin position="30"/>
        <end position="58"/>
    </location>
    <ligand>
        <name>NAD(+)</name>
        <dbReference type="ChEBI" id="CHEBI:57540"/>
    </ligand>
</feature>
<feature type="binding site" evidence="1">
    <location>
        <position position="100"/>
    </location>
    <ligand>
        <name>NAD(+)</name>
        <dbReference type="ChEBI" id="CHEBI:57540"/>
    </ligand>
</feature>
<feature type="binding site" evidence="1">
    <location>
        <position position="107"/>
    </location>
    <ligand>
        <name>substrate</name>
    </ligand>
</feature>
<feature type="binding site" evidence="1">
    <location>
        <position position="139"/>
    </location>
    <ligand>
        <name>NAD(+)</name>
        <dbReference type="ChEBI" id="CHEBI:57540"/>
    </ligand>
</feature>
<feature type="binding site" evidence="1">
    <location>
        <position position="139"/>
    </location>
    <ligand>
        <name>substrate</name>
    </ligand>
</feature>
<feature type="binding site" evidence="1">
    <location>
        <position position="170"/>
    </location>
    <ligand>
        <name>substrate</name>
    </ligand>
</feature>
<feature type="binding site" evidence="1">
    <location>
        <position position="249"/>
    </location>
    <ligand>
        <name>substrate</name>
    </ligand>
</feature>
<feature type="modified residue" description="N-acetylalanine" evidence="4">
    <location>
        <position position="2"/>
    </location>
</feature>
<feature type="modified residue" description="N6-acetyllysine" evidence="2">
    <location>
        <position position="7"/>
    </location>
</feature>
<feature type="modified residue" description="Phosphoserine" evidence="2">
    <location>
        <position position="44"/>
    </location>
</feature>
<feature type="modified residue" description="N6-acetyllysine" evidence="2">
    <location>
        <position position="58"/>
    </location>
</feature>
<feature type="modified residue" description="N6-acetyllysine" evidence="2">
    <location>
        <position position="119"/>
    </location>
</feature>
<feature type="modified residue" description="Phosphotyrosine" evidence="2">
    <location>
        <position position="240"/>
    </location>
</feature>
<feature type="modified residue" description="N6-acetyllysine" evidence="2">
    <location>
        <position position="329"/>
    </location>
</feature>
<feature type="sequence conflict" description="In Ref. 2; AA sequence." evidence="5" ref="2">
    <original>EE</original>
    <variation>QQ</variation>
    <location>
        <begin position="14"/>
        <end position="15"/>
    </location>
</feature>
<feature type="sequence conflict" description="In Ref. 2; AA sequence." evidence="5" ref="2">
    <original>D</original>
    <variation>N</variation>
    <location>
        <position position="81"/>
    </location>
</feature>
<feature type="sequence conflict" description="In Ref. 2; AA sequence." evidence="5" ref="2">
    <original>D</original>
    <variation>N</variation>
    <location>
        <position position="131"/>
    </location>
</feature>
<feature type="sequence conflict" description="In Ref. 2; AA sequence." evidence="5" ref="2">
    <original>E</original>
    <variation>Q</variation>
    <location>
        <position position="214"/>
    </location>
</feature>
<feature type="helix" evidence="7">
    <location>
        <begin position="4"/>
        <end position="8"/>
    </location>
</feature>
<feature type="strand" evidence="7">
    <location>
        <begin position="9"/>
        <end position="13"/>
    </location>
</feature>
<feature type="strand" evidence="7">
    <location>
        <begin position="24"/>
        <end position="27"/>
    </location>
</feature>
<feature type="helix" evidence="7">
    <location>
        <begin position="31"/>
        <end position="42"/>
    </location>
</feature>
<feature type="strand" evidence="7">
    <location>
        <begin position="47"/>
        <end position="52"/>
    </location>
</feature>
<feature type="helix" evidence="7">
    <location>
        <begin position="56"/>
        <end position="67"/>
    </location>
</feature>
<feature type="helix" evidence="7">
    <location>
        <begin position="68"/>
        <end position="72"/>
    </location>
</feature>
<feature type="strand" evidence="7">
    <location>
        <begin position="76"/>
        <end position="80"/>
    </location>
</feature>
<feature type="helix" evidence="7">
    <location>
        <begin position="84"/>
        <end position="87"/>
    </location>
</feature>
<feature type="strand" evidence="7">
    <location>
        <begin position="91"/>
        <end position="95"/>
    </location>
</feature>
<feature type="strand" evidence="6">
    <location>
        <begin position="103"/>
        <end position="106"/>
    </location>
</feature>
<feature type="helix" evidence="7">
    <location>
        <begin position="107"/>
        <end position="110"/>
    </location>
</feature>
<feature type="helix" evidence="7">
    <location>
        <begin position="111"/>
        <end position="128"/>
    </location>
</feature>
<feature type="strand" evidence="7">
    <location>
        <begin position="133"/>
        <end position="136"/>
    </location>
</feature>
<feature type="strand" evidence="7">
    <location>
        <begin position="138"/>
        <end position="140"/>
    </location>
</feature>
<feature type="helix" evidence="7">
    <location>
        <begin position="141"/>
        <end position="152"/>
    </location>
</feature>
<feature type="helix" evidence="7">
    <location>
        <begin position="156"/>
        <end position="158"/>
    </location>
</feature>
<feature type="strand" evidence="7">
    <location>
        <begin position="159"/>
        <end position="161"/>
    </location>
</feature>
<feature type="helix" evidence="7">
    <location>
        <begin position="165"/>
        <end position="179"/>
    </location>
</feature>
<feature type="helix" evidence="7">
    <location>
        <begin position="183"/>
        <end position="185"/>
    </location>
</feature>
<feature type="strand" evidence="7">
    <location>
        <begin position="190"/>
        <end position="192"/>
    </location>
</feature>
<feature type="helix" evidence="7">
    <location>
        <begin position="202"/>
        <end position="204"/>
    </location>
</feature>
<feature type="strand" evidence="6">
    <location>
        <begin position="208"/>
        <end position="211"/>
    </location>
</feature>
<feature type="helix" evidence="7">
    <location>
        <begin position="212"/>
        <end position="215"/>
    </location>
</feature>
<feature type="turn" evidence="7">
    <location>
        <begin position="217"/>
        <end position="220"/>
    </location>
</feature>
<feature type="strand" evidence="7">
    <location>
        <begin position="221"/>
        <end position="223"/>
    </location>
</feature>
<feature type="helix" evidence="7">
    <location>
        <begin position="228"/>
        <end position="246"/>
    </location>
</feature>
<feature type="helix" evidence="7">
    <location>
        <begin position="251"/>
        <end position="265"/>
    </location>
</feature>
<feature type="strand" evidence="7">
    <location>
        <begin position="270"/>
        <end position="277"/>
    </location>
</feature>
<feature type="strand" evidence="6">
    <location>
        <begin position="280"/>
        <end position="282"/>
    </location>
</feature>
<feature type="strand" evidence="6">
    <location>
        <begin position="285"/>
        <end position="287"/>
    </location>
</feature>
<feature type="strand" evidence="7">
    <location>
        <begin position="289"/>
        <end position="297"/>
    </location>
</feature>
<feature type="strand" evidence="7">
    <location>
        <begin position="300"/>
        <end position="305"/>
    </location>
</feature>
<feature type="helix" evidence="7">
    <location>
        <begin position="311"/>
        <end position="329"/>
    </location>
</feature>
<accession>P00336</accession>
<evidence type="ECO:0000250" key="1"/>
<evidence type="ECO:0000250" key="2">
    <source>
        <dbReference type="UniProtKB" id="P07195"/>
    </source>
</evidence>
<evidence type="ECO:0000269" key="3">
    <source>
    </source>
</evidence>
<evidence type="ECO:0000269" key="4">
    <source>
    </source>
</evidence>
<evidence type="ECO:0000305" key="5"/>
<evidence type="ECO:0007829" key="6">
    <source>
        <dbReference type="PDB" id="5LDH"/>
    </source>
</evidence>
<evidence type="ECO:0007829" key="7">
    <source>
        <dbReference type="PDB" id="6CEP"/>
    </source>
</evidence>
<reference key="1">
    <citation type="journal article" date="1994" name="Proc. Natl. Acad. Sci. U.S.A.">
        <title>Evolutionary relationships of lactate dehydrogenases (LDHs) from mammals, birds, an amphibian, fish, barley, and bacteria: LDH cDNA sequences from Xenopus, pig, and rat.</title>
        <authorList>
            <person name="Tsuji S."/>
            <person name="Qureshi M.A."/>
            <person name="Hou E.W."/>
            <person name="Fitch W.M."/>
            <person name="Li S.S.-L."/>
        </authorList>
    </citation>
    <scope>NUCLEOTIDE SEQUENCE [MRNA]</scope>
    <source>
        <tissue>Muscle</tissue>
    </source>
</reference>
<reference key="2">
    <citation type="journal article" date="1977" name="Hoppe-Seyler's Z. Physiol. Chem.">
        <title>The primary structure of porcine lactate dehydrogenase: isoenzymes M4 and H4.</title>
        <authorList>
            <person name="Kiltz H.-H."/>
            <person name="Keil W."/>
            <person name="Griesbach M."/>
            <person name="Petry K."/>
            <person name="Meyer H."/>
        </authorList>
    </citation>
    <scope>PROTEIN SEQUENCE OF 2-334</scope>
    <scope>ACETYLATION AT ALA-2</scope>
</reference>
<reference key="3">
    <citation type="submission" date="1977-10" db="PIR data bank">
        <authorList>
            <person name="Kiltz H.-H."/>
        </authorList>
    </citation>
    <scope>SEQUENCE REVISION TO 22; 148; 216 AND 218</scope>
</reference>
<reference key="4">
    <citation type="journal article" date="1981" name="J. Mol. Biol.">
        <title>Structure of the active ternary complex of pig heart lactate dehydrogenase with S-lac-NAD at 2.7-A resolution.</title>
        <authorList>
            <person name="Grau U.M."/>
            <person name="Trommer W.E."/>
            <person name="Rossmann M.G."/>
        </authorList>
    </citation>
    <scope>X-RAY CRYSTALLOGRAPHY (2.7 ANGSTROMS)</scope>
</reference>
<name>LDHB_PIG</name>
<dbReference type="EC" id="1.1.1.27" evidence="2"/>
<dbReference type="EMBL" id="U07180">
    <property type="protein sequence ID" value="AAA50438.1"/>
    <property type="molecule type" value="mRNA"/>
</dbReference>
<dbReference type="PIR" id="A91671">
    <property type="entry name" value="DEPGLH"/>
</dbReference>
<dbReference type="RefSeq" id="NP_001106758.1">
    <property type="nucleotide sequence ID" value="NM_001113287.1"/>
</dbReference>
<dbReference type="RefSeq" id="XP_020947911.1">
    <property type="nucleotide sequence ID" value="XM_021092252.1"/>
</dbReference>
<dbReference type="PDB" id="5LDH">
    <property type="method" value="X-ray"/>
    <property type="resolution" value="2.70 A"/>
    <property type="chains" value="A/B=2-334"/>
</dbReference>
<dbReference type="PDB" id="5YTA">
    <property type="method" value="X-ray"/>
    <property type="resolution" value="2.10 A"/>
    <property type="chains" value="A/B=2-333"/>
</dbReference>
<dbReference type="PDB" id="6CEP">
    <property type="method" value="X-ray"/>
    <property type="resolution" value="2.00 A"/>
    <property type="chains" value="A/B/C/D=1-334"/>
</dbReference>
<dbReference type="PDBsum" id="5LDH"/>
<dbReference type="PDBsum" id="5YTA"/>
<dbReference type="PDBsum" id="6CEP"/>
<dbReference type="SMR" id="P00336"/>
<dbReference type="CORUM" id="P00336"/>
<dbReference type="FunCoup" id="P00336">
    <property type="interactions" value="829"/>
</dbReference>
<dbReference type="STRING" id="9823.ENSSSCP00000000606"/>
<dbReference type="BindingDB" id="P00336"/>
<dbReference type="ChEMBL" id="CHEMBL3823"/>
<dbReference type="iPTMnet" id="P00336"/>
<dbReference type="PaxDb" id="9823-ENSSSCP00000024847"/>
<dbReference type="PeptideAtlas" id="P00336"/>
<dbReference type="Ensembl" id="ENSSSCT00000000620.5">
    <property type="protein sequence ID" value="ENSSSCP00000000606.4"/>
    <property type="gene ID" value="ENSSSCG00000000576.5"/>
</dbReference>
<dbReference type="Ensembl" id="ENSSSCT00115007795">
    <property type="protein sequence ID" value="ENSSSCP00115007316"/>
    <property type="gene ID" value="ENSSSCG00115004527"/>
</dbReference>
<dbReference type="GeneID" id="100621540"/>
<dbReference type="GeneID" id="102161427"/>
<dbReference type="KEGG" id="ssc:100621540"/>
<dbReference type="CTD" id="3945"/>
<dbReference type="eggNOG" id="KOG1495">
    <property type="taxonomic scope" value="Eukaryota"/>
</dbReference>
<dbReference type="GeneTree" id="ENSGT00940000153525"/>
<dbReference type="InParanoid" id="P00336"/>
<dbReference type="OrthoDB" id="5405561at2759"/>
<dbReference type="BRENDA" id="1.1.1.27">
    <property type="organism ID" value="6170"/>
</dbReference>
<dbReference type="Reactome" id="R-SSC-70268">
    <property type="pathway name" value="Pyruvate metabolism"/>
</dbReference>
<dbReference type="SABIO-RK" id="P00336"/>
<dbReference type="UniPathway" id="UPA00554">
    <property type="reaction ID" value="UER00611"/>
</dbReference>
<dbReference type="EvolutionaryTrace" id="P00336"/>
<dbReference type="PRO" id="PR:P00336"/>
<dbReference type="Proteomes" id="UP000008227">
    <property type="component" value="Chromosome 5"/>
</dbReference>
<dbReference type="Proteomes" id="UP000314985">
    <property type="component" value="Unplaced"/>
</dbReference>
<dbReference type="Proteomes" id="UP000694570">
    <property type="component" value="Unplaced"/>
</dbReference>
<dbReference type="Proteomes" id="UP000694571">
    <property type="component" value="Unplaced"/>
</dbReference>
<dbReference type="Proteomes" id="UP000694720">
    <property type="component" value="Unplaced"/>
</dbReference>
<dbReference type="Proteomes" id="UP000694722">
    <property type="component" value="Unplaced"/>
</dbReference>
<dbReference type="Proteomes" id="UP000694723">
    <property type="component" value="Unplaced"/>
</dbReference>
<dbReference type="Proteomes" id="UP000694724">
    <property type="component" value="Unplaced"/>
</dbReference>
<dbReference type="Proteomes" id="UP000694725">
    <property type="component" value="Unplaced"/>
</dbReference>
<dbReference type="Proteomes" id="UP000694726">
    <property type="component" value="Unplaced"/>
</dbReference>
<dbReference type="Proteomes" id="UP000694727">
    <property type="component" value="Unplaced"/>
</dbReference>
<dbReference type="Proteomes" id="UP000694728">
    <property type="component" value="Unplaced"/>
</dbReference>
<dbReference type="GO" id="GO:0005743">
    <property type="term" value="C:mitochondrial inner membrane"/>
    <property type="evidence" value="ECO:0000250"/>
    <property type="project" value="UniProtKB"/>
</dbReference>
<dbReference type="GO" id="GO:0004459">
    <property type="term" value="F:L-lactate dehydrogenase activity"/>
    <property type="evidence" value="ECO:0000250"/>
    <property type="project" value="UniProtKB"/>
</dbReference>
<dbReference type="GO" id="GO:0019752">
    <property type="term" value="P:carboxylic acid metabolic process"/>
    <property type="evidence" value="ECO:0007669"/>
    <property type="project" value="InterPro"/>
</dbReference>
<dbReference type="CDD" id="cd05293">
    <property type="entry name" value="LDH_1"/>
    <property type="match status" value="1"/>
</dbReference>
<dbReference type="FunFam" id="3.40.50.720:FF:000029">
    <property type="entry name" value="L-lactate dehydrogenase A chain"/>
    <property type="match status" value="1"/>
</dbReference>
<dbReference type="FunFam" id="3.90.110.10:FF:000003">
    <property type="entry name" value="L-lactate dehydrogenase A chain"/>
    <property type="match status" value="1"/>
</dbReference>
<dbReference type="Gene3D" id="3.90.110.10">
    <property type="entry name" value="Lactate dehydrogenase/glycoside hydrolase, family 4, C-terminal"/>
    <property type="match status" value="1"/>
</dbReference>
<dbReference type="Gene3D" id="3.40.50.720">
    <property type="entry name" value="NAD(P)-binding Rossmann-like Domain"/>
    <property type="match status" value="1"/>
</dbReference>
<dbReference type="HAMAP" id="MF_00488">
    <property type="entry name" value="Lactate_dehydrog"/>
    <property type="match status" value="1"/>
</dbReference>
<dbReference type="InterPro" id="IPR001557">
    <property type="entry name" value="L-lactate/malate_DH"/>
</dbReference>
<dbReference type="InterPro" id="IPR011304">
    <property type="entry name" value="L-lactate_DH"/>
</dbReference>
<dbReference type="InterPro" id="IPR018177">
    <property type="entry name" value="L-lactate_DH_AS"/>
</dbReference>
<dbReference type="InterPro" id="IPR022383">
    <property type="entry name" value="Lactate/malate_DH_C"/>
</dbReference>
<dbReference type="InterPro" id="IPR001236">
    <property type="entry name" value="Lactate/malate_DH_N"/>
</dbReference>
<dbReference type="InterPro" id="IPR015955">
    <property type="entry name" value="Lactate_DH/Glyco_Ohase_4_C"/>
</dbReference>
<dbReference type="InterPro" id="IPR036291">
    <property type="entry name" value="NAD(P)-bd_dom_sf"/>
</dbReference>
<dbReference type="NCBIfam" id="TIGR01771">
    <property type="entry name" value="L-LDH-NAD"/>
    <property type="match status" value="1"/>
</dbReference>
<dbReference type="NCBIfam" id="NF000824">
    <property type="entry name" value="PRK00066.1"/>
    <property type="match status" value="1"/>
</dbReference>
<dbReference type="PANTHER" id="PTHR43128">
    <property type="entry name" value="L-2-HYDROXYCARBOXYLATE DEHYDROGENASE (NAD(P)(+))"/>
    <property type="match status" value="1"/>
</dbReference>
<dbReference type="PANTHER" id="PTHR43128:SF2">
    <property type="entry name" value="L-LACTATE DEHYDROGENASE B CHAIN"/>
    <property type="match status" value="1"/>
</dbReference>
<dbReference type="Pfam" id="PF02866">
    <property type="entry name" value="Ldh_1_C"/>
    <property type="match status" value="1"/>
</dbReference>
<dbReference type="Pfam" id="PF00056">
    <property type="entry name" value="Ldh_1_N"/>
    <property type="match status" value="1"/>
</dbReference>
<dbReference type="PIRSF" id="PIRSF000102">
    <property type="entry name" value="Lac_mal_DH"/>
    <property type="match status" value="1"/>
</dbReference>
<dbReference type="PRINTS" id="PR00086">
    <property type="entry name" value="LLDHDRGNASE"/>
</dbReference>
<dbReference type="SUPFAM" id="SSF56327">
    <property type="entry name" value="LDH C-terminal domain-like"/>
    <property type="match status" value="1"/>
</dbReference>
<dbReference type="SUPFAM" id="SSF51735">
    <property type="entry name" value="NAD(P)-binding Rossmann-fold domains"/>
    <property type="match status" value="1"/>
</dbReference>
<dbReference type="PROSITE" id="PS00064">
    <property type="entry name" value="L_LDH"/>
    <property type="match status" value="1"/>
</dbReference>
<gene>
    <name type="primary">LDHB</name>
</gene>